<gene>
    <name type="ordered locus">KPK_3192</name>
</gene>
<keyword id="KW-0223">Dioxygenase</keyword>
<keyword id="KW-0408">Iron</keyword>
<keyword id="KW-0479">Metal-binding</keyword>
<keyword id="KW-0560">Oxidoreductase</keyword>
<keyword id="KW-0847">Vitamin C</keyword>
<proteinExistence type="inferred from homology"/>
<accession>B5XT12</accession>
<sequence length="225" mass="25260">MMYHIPDVLSADQVAEFTRQLAQAEWVDGRVTVGNQGAAVKQNQQIDTRTPLYARLQAAVLDALRGHPQFFSAALPRTISAPLFNRYGPGETYGFHVDGAVRQNAEAGWMRTDLSATLFLCDPESYEGGELVIEDTYGQHRVKLPAGHLVLYPASSLHCVTPVTHGVRQASFLWIQSMVRDDKQRATLYDLDRTIQSLKARFGDGEEVLSLLNMYHNLLRQWTEV</sequence>
<evidence type="ECO:0000255" key="1">
    <source>
        <dbReference type="HAMAP-Rule" id="MF_00657"/>
    </source>
</evidence>
<reference key="1">
    <citation type="journal article" date="2008" name="PLoS Genet.">
        <title>Complete genome sequence of the N2-fixing broad host range endophyte Klebsiella pneumoniae 342 and virulence predictions verified in mice.</title>
        <authorList>
            <person name="Fouts D.E."/>
            <person name="Tyler H.L."/>
            <person name="DeBoy R.T."/>
            <person name="Daugherty S."/>
            <person name="Ren Q."/>
            <person name="Badger J.H."/>
            <person name="Durkin A.S."/>
            <person name="Huot H."/>
            <person name="Shrivastava S."/>
            <person name="Kothari S."/>
            <person name="Dodson R.J."/>
            <person name="Mohamoud Y."/>
            <person name="Khouri H."/>
            <person name="Roesch L.F.W."/>
            <person name="Krogfelt K.A."/>
            <person name="Struve C."/>
            <person name="Triplett E.W."/>
            <person name="Methe B.A."/>
        </authorList>
    </citation>
    <scope>NUCLEOTIDE SEQUENCE [LARGE SCALE GENOMIC DNA]</scope>
    <source>
        <strain>342</strain>
    </source>
</reference>
<feature type="chain" id="PRO_1000131215" description="PKHD-type hydroxylase KPK_3192">
    <location>
        <begin position="1"/>
        <end position="225"/>
    </location>
</feature>
<feature type="domain" description="Fe2OG dioxygenase" evidence="1">
    <location>
        <begin position="78"/>
        <end position="177"/>
    </location>
</feature>
<feature type="binding site" evidence="1">
    <location>
        <position position="96"/>
    </location>
    <ligand>
        <name>Fe cation</name>
        <dbReference type="ChEBI" id="CHEBI:24875"/>
    </ligand>
</feature>
<feature type="binding site" evidence="1">
    <location>
        <position position="98"/>
    </location>
    <ligand>
        <name>Fe cation</name>
        <dbReference type="ChEBI" id="CHEBI:24875"/>
    </ligand>
</feature>
<feature type="binding site" evidence="1">
    <location>
        <position position="158"/>
    </location>
    <ligand>
        <name>Fe cation</name>
        <dbReference type="ChEBI" id="CHEBI:24875"/>
    </ligand>
</feature>
<feature type="binding site" evidence="1">
    <location>
        <position position="168"/>
    </location>
    <ligand>
        <name>2-oxoglutarate</name>
        <dbReference type="ChEBI" id="CHEBI:16810"/>
    </ligand>
</feature>
<organism>
    <name type="scientific">Klebsiella pneumoniae (strain 342)</name>
    <dbReference type="NCBI Taxonomy" id="507522"/>
    <lineage>
        <taxon>Bacteria</taxon>
        <taxon>Pseudomonadati</taxon>
        <taxon>Pseudomonadota</taxon>
        <taxon>Gammaproteobacteria</taxon>
        <taxon>Enterobacterales</taxon>
        <taxon>Enterobacteriaceae</taxon>
        <taxon>Klebsiella/Raoultella group</taxon>
        <taxon>Klebsiella</taxon>
        <taxon>Klebsiella pneumoniae complex</taxon>
    </lineage>
</organism>
<protein>
    <recommendedName>
        <fullName evidence="1">PKHD-type hydroxylase KPK_3192</fullName>
        <ecNumber evidence="1">1.14.11.-</ecNumber>
    </recommendedName>
</protein>
<dbReference type="EC" id="1.14.11.-" evidence="1"/>
<dbReference type="EMBL" id="CP000964">
    <property type="protein sequence ID" value="ACI09681.1"/>
    <property type="molecule type" value="Genomic_DNA"/>
</dbReference>
<dbReference type="SMR" id="B5XT12"/>
<dbReference type="KEGG" id="kpe:KPK_3192"/>
<dbReference type="HOGENOM" id="CLU_106663_0_0_6"/>
<dbReference type="BioCyc" id="KPNE507522:GI0B-3178-MONOMER"/>
<dbReference type="Proteomes" id="UP000001734">
    <property type="component" value="Chromosome"/>
</dbReference>
<dbReference type="GO" id="GO:0016706">
    <property type="term" value="F:2-oxoglutarate-dependent dioxygenase activity"/>
    <property type="evidence" value="ECO:0007669"/>
    <property type="project" value="UniProtKB-UniRule"/>
</dbReference>
<dbReference type="GO" id="GO:0005506">
    <property type="term" value="F:iron ion binding"/>
    <property type="evidence" value="ECO:0007669"/>
    <property type="project" value="UniProtKB-UniRule"/>
</dbReference>
<dbReference type="GO" id="GO:0031418">
    <property type="term" value="F:L-ascorbic acid binding"/>
    <property type="evidence" value="ECO:0007669"/>
    <property type="project" value="UniProtKB-KW"/>
</dbReference>
<dbReference type="GO" id="GO:0006974">
    <property type="term" value="P:DNA damage response"/>
    <property type="evidence" value="ECO:0007669"/>
    <property type="project" value="TreeGrafter"/>
</dbReference>
<dbReference type="GO" id="GO:0006879">
    <property type="term" value="P:intracellular iron ion homeostasis"/>
    <property type="evidence" value="ECO:0007669"/>
    <property type="project" value="TreeGrafter"/>
</dbReference>
<dbReference type="FunFam" id="2.60.120.620:FF:000006">
    <property type="entry name" value="PKHD-type hydroxylase YbiX"/>
    <property type="match status" value="1"/>
</dbReference>
<dbReference type="Gene3D" id="2.60.120.620">
    <property type="entry name" value="q2cbj1_9rhob like domain"/>
    <property type="match status" value="1"/>
</dbReference>
<dbReference type="Gene3D" id="4.10.860.20">
    <property type="entry name" value="Rabenosyn, Rab binding domain"/>
    <property type="match status" value="1"/>
</dbReference>
<dbReference type="HAMAP" id="MF_00657">
    <property type="entry name" value="Hydroxyl_YbiX"/>
    <property type="match status" value="1"/>
</dbReference>
<dbReference type="InterPro" id="IPR005123">
    <property type="entry name" value="Oxoglu/Fe-dep_dioxygenase_dom"/>
</dbReference>
<dbReference type="InterPro" id="IPR041097">
    <property type="entry name" value="PKHD_C"/>
</dbReference>
<dbReference type="InterPro" id="IPR023550">
    <property type="entry name" value="PKHD_hydroxylase"/>
</dbReference>
<dbReference type="InterPro" id="IPR006620">
    <property type="entry name" value="Pro_4_hyd_alph"/>
</dbReference>
<dbReference type="InterPro" id="IPR044862">
    <property type="entry name" value="Pro_4_hyd_alph_FE2OG_OXY"/>
</dbReference>
<dbReference type="NCBIfam" id="NF003972">
    <property type="entry name" value="PRK05467.1-1"/>
    <property type="match status" value="1"/>
</dbReference>
<dbReference type="NCBIfam" id="NF003974">
    <property type="entry name" value="PRK05467.1-3"/>
    <property type="match status" value="1"/>
</dbReference>
<dbReference type="NCBIfam" id="NF003975">
    <property type="entry name" value="PRK05467.1-4"/>
    <property type="match status" value="1"/>
</dbReference>
<dbReference type="PANTHER" id="PTHR41536">
    <property type="entry name" value="PKHD-TYPE HYDROXYLASE YBIX"/>
    <property type="match status" value="1"/>
</dbReference>
<dbReference type="PANTHER" id="PTHR41536:SF1">
    <property type="entry name" value="PKHD-TYPE HYDROXYLASE YBIX"/>
    <property type="match status" value="1"/>
</dbReference>
<dbReference type="Pfam" id="PF13640">
    <property type="entry name" value="2OG-FeII_Oxy_3"/>
    <property type="match status" value="1"/>
</dbReference>
<dbReference type="Pfam" id="PF18331">
    <property type="entry name" value="PKHD_C"/>
    <property type="match status" value="1"/>
</dbReference>
<dbReference type="SMART" id="SM00702">
    <property type="entry name" value="P4Hc"/>
    <property type="match status" value="1"/>
</dbReference>
<dbReference type="PROSITE" id="PS51471">
    <property type="entry name" value="FE2OG_OXY"/>
    <property type="match status" value="1"/>
</dbReference>
<comment type="cofactor">
    <cofactor evidence="1">
        <name>Fe(2+)</name>
        <dbReference type="ChEBI" id="CHEBI:29033"/>
    </cofactor>
    <text evidence="1">Binds 1 Fe(2+) ion per subunit.</text>
</comment>
<comment type="cofactor">
    <cofactor evidence="1">
        <name>L-ascorbate</name>
        <dbReference type="ChEBI" id="CHEBI:38290"/>
    </cofactor>
</comment>
<name>Y3192_KLEP3</name>